<keyword id="KW-0030">Aminoacyl-tRNA synthetase</keyword>
<keyword id="KW-0067">ATP-binding</keyword>
<keyword id="KW-0963">Cytoplasm</keyword>
<keyword id="KW-0436">Ligase</keyword>
<keyword id="KW-0547">Nucleotide-binding</keyword>
<keyword id="KW-0648">Protein biosynthesis</keyword>
<evidence type="ECO:0000255" key="1">
    <source>
        <dbReference type="HAMAP-Rule" id="MF_00534"/>
    </source>
</evidence>
<protein>
    <recommendedName>
        <fullName evidence="1">Asparagine--tRNA ligase</fullName>
        <ecNumber evidence="1">6.1.1.22</ecNumber>
    </recommendedName>
    <alternativeName>
        <fullName evidence="1">Asparaginyl-tRNA synthetase</fullName>
        <shortName evidence="1">AsnRS</shortName>
    </alternativeName>
</protein>
<proteinExistence type="inferred from homology"/>
<accession>Q0T6B1</accession>
<sequence length="466" mass="52570">MSVVPVADVLQGRVAVDSEVTVRGWVRTRRDSKAGISFLAVYDGSCFDPVQAVINNSLPNYNEDVLRLTTGCSVIVTGKVVASPGQGQQFEIQASKVEVAGWVEDPDTYPMAAKRHSIEYLREVAHLRPRTNLIGAVARVRHTLAQALHRFFNEQGFFWVSTPLITASDTEGAGEMFRVSTLDLENLPRNDQGKVDFDKDFFGKESFLTVSGQLNGETYACALSKIYTFGPTFRAENSNTSRHLAEFWMLEPEVAFANLNDIAGLAEAMLKYVFKAVLEERADDMKFFAERVDKDAVSRLERFIEADFAQVDYTDAVTILENCGRKFENPVYWGVDLSSEHERYLAEEHFKAPVVVKNYPKDIKAFYMRLNEDGKTVAAMDVLAPGIGEIIGGSQREERLDVLDERMLEMGLNKEDYWWYRDLRRYGTVPHSGFGLGFERLIAYVTGVQNVRDVIPFPRTPRNASF</sequence>
<name>SYN_SHIF8</name>
<gene>
    <name evidence="1" type="primary">asnS</name>
    <name type="ordered locus">SFV_0932</name>
</gene>
<organism>
    <name type="scientific">Shigella flexneri serotype 5b (strain 8401)</name>
    <dbReference type="NCBI Taxonomy" id="373384"/>
    <lineage>
        <taxon>Bacteria</taxon>
        <taxon>Pseudomonadati</taxon>
        <taxon>Pseudomonadota</taxon>
        <taxon>Gammaproteobacteria</taxon>
        <taxon>Enterobacterales</taxon>
        <taxon>Enterobacteriaceae</taxon>
        <taxon>Shigella</taxon>
    </lineage>
</organism>
<reference key="1">
    <citation type="journal article" date="2006" name="BMC Genomics">
        <title>Complete genome sequence of Shigella flexneri 5b and comparison with Shigella flexneri 2a.</title>
        <authorList>
            <person name="Nie H."/>
            <person name="Yang F."/>
            <person name="Zhang X."/>
            <person name="Yang J."/>
            <person name="Chen L."/>
            <person name="Wang J."/>
            <person name="Xiong Z."/>
            <person name="Peng J."/>
            <person name="Sun L."/>
            <person name="Dong J."/>
            <person name="Xue Y."/>
            <person name="Xu X."/>
            <person name="Chen S."/>
            <person name="Yao Z."/>
            <person name="Shen Y."/>
            <person name="Jin Q."/>
        </authorList>
    </citation>
    <scope>NUCLEOTIDE SEQUENCE [LARGE SCALE GENOMIC DNA]</scope>
    <source>
        <strain>8401</strain>
    </source>
</reference>
<comment type="catalytic activity">
    <reaction evidence="1">
        <text>tRNA(Asn) + L-asparagine + ATP = L-asparaginyl-tRNA(Asn) + AMP + diphosphate + H(+)</text>
        <dbReference type="Rhea" id="RHEA:11180"/>
        <dbReference type="Rhea" id="RHEA-COMP:9659"/>
        <dbReference type="Rhea" id="RHEA-COMP:9674"/>
        <dbReference type="ChEBI" id="CHEBI:15378"/>
        <dbReference type="ChEBI" id="CHEBI:30616"/>
        <dbReference type="ChEBI" id="CHEBI:33019"/>
        <dbReference type="ChEBI" id="CHEBI:58048"/>
        <dbReference type="ChEBI" id="CHEBI:78442"/>
        <dbReference type="ChEBI" id="CHEBI:78515"/>
        <dbReference type="ChEBI" id="CHEBI:456215"/>
        <dbReference type="EC" id="6.1.1.22"/>
    </reaction>
</comment>
<comment type="subunit">
    <text evidence="1">Homodimer.</text>
</comment>
<comment type="subcellular location">
    <subcellularLocation>
        <location evidence="1">Cytoplasm</location>
    </subcellularLocation>
</comment>
<comment type="similarity">
    <text evidence="1">Belongs to the class-II aminoacyl-tRNA synthetase family.</text>
</comment>
<dbReference type="EC" id="6.1.1.22" evidence="1"/>
<dbReference type="EMBL" id="CP000266">
    <property type="protein sequence ID" value="ABF03154.1"/>
    <property type="molecule type" value="Genomic_DNA"/>
</dbReference>
<dbReference type="RefSeq" id="WP_000117881.1">
    <property type="nucleotide sequence ID" value="NC_008258.1"/>
</dbReference>
<dbReference type="SMR" id="Q0T6B1"/>
<dbReference type="GeneID" id="93776484"/>
<dbReference type="KEGG" id="sfv:SFV_0932"/>
<dbReference type="HOGENOM" id="CLU_004553_2_0_6"/>
<dbReference type="Proteomes" id="UP000000659">
    <property type="component" value="Chromosome"/>
</dbReference>
<dbReference type="GO" id="GO:0005737">
    <property type="term" value="C:cytoplasm"/>
    <property type="evidence" value="ECO:0007669"/>
    <property type="project" value="UniProtKB-SubCell"/>
</dbReference>
<dbReference type="GO" id="GO:0004816">
    <property type="term" value="F:asparagine-tRNA ligase activity"/>
    <property type="evidence" value="ECO:0007669"/>
    <property type="project" value="UniProtKB-UniRule"/>
</dbReference>
<dbReference type="GO" id="GO:0005524">
    <property type="term" value="F:ATP binding"/>
    <property type="evidence" value="ECO:0007669"/>
    <property type="project" value="UniProtKB-UniRule"/>
</dbReference>
<dbReference type="GO" id="GO:0003676">
    <property type="term" value="F:nucleic acid binding"/>
    <property type="evidence" value="ECO:0007669"/>
    <property type="project" value="InterPro"/>
</dbReference>
<dbReference type="GO" id="GO:0006421">
    <property type="term" value="P:asparaginyl-tRNA aminoacylation"/>
    <property type="evidence" value="ECO:0007669"/>
    <property type="project" value="UniProtKB-UniRule"/>
</dbReference>
<dbReference type="CDD" id="cd00776">
    <property type="entry name" value="AsxRS_core"/>
    <property type="match status" value="1"/>
</dbReference>
<dbReference type="CDD" id="cd04318">
    <property type="entry name" value="EcAsnRS_like_N"/>
    <property type="match status" value="1"/>
</dbReference>
<dbReference type="FunFam" id="2.40.50.140:FF:000116">
    <property type="entry name" value="Asparagine--tRNA ligase"/>
    <property type="match status" value="1"/>
</dbReference>
<dbReference type="FunFam" id="3.30.930.10:FF:000016">
    <property type="entry name" value="Asparagine--tRNA ligase"/>
    <property type="match status" value="1"/>
</dbReference>
<dbReference type="Gene3D" id="3.30.930.10">
    <property type="entry name" value="Bira Bifunctional Protein, Domain 2"/>
    <property type="match status" value="1"/>
</dbReference>
<dbReference type="Gene3D" id="2.40.50.140">
    <property type="entry name" value="Nucleic acid-binding proteins"/>
    <property type="match status" value="1"/>
</dbReference>
<dbReference type="HAMAP" id="MF_00534">
    <property type="entry name" value="Asn_tRNA_synth"/>
    <property type="match status" value="1"/>
</dbReference>
<dbReference type="InterPro" id="IPR004364">
    <property type="entry name" value="Aa-tRNA-synt_II"/>
</dbReference>
<dbReference type="InterPro" id="IPR006195">
    <property type="entry name" value="aa-tRNA-synth_II"/>
</dbReference>
<dbReference type="InterPro" id="IPR045864">
    <property type="entry name" value="aa-tRNA-synth_II/BPL/LPL"/>
</dbReference>
<dbReference type="InterPro" id="IPR004522">
    <property type="entry name" value="Asn-tRNA-ligase"/>
</dbReference>
<dbReference type="InterPro" id="IPR002312">
    <property type="entry name" value="Asp/Asn-tRNA-synth_IIb"/>
</dbReference>
<dbReference type="InterPro" id="IPR012340">
    <property type="entry name" value="NA-bd_OB-fold"/>
</dbReference>
<dbReference type="InterPro" id="IPR004365">
    <property type="entry name" value="NA-bd_OB_tRNA"/>
</dbReference>
<dbReference type="NCBIfam" id="TIGR00457">
    <property type="entry name" value="asnS"/>
    <property type="match status" value="1"/>
</dbReference>
<dbReference type="NCBIfam" id="NF003037">
    <property type="entry name" value="PRK03932.1"/>
    <property type="match status" value="1"/>
</dbReference>
<dbReference type="PANTHER" id="PTHR22594:SF34">
    <property type="entry name" value="ASPARAGINE--TRNA LIGASE, MITOCHONDRIAL-RELATED"/>
    <property type="match status" value="1"/>
</dbReference>
<dbReference type="PANTHER" id="PTHR22594">
    <property type="entry name" value="ASPARTYL/LYSYL-TRNA SYNTHETASE"/>
    <property type="match status" value="1"/>
</dbReference>
<dbReference type="Pfam" id="PF00152">
    <property type="entry name" value="tRNA-synt_2"/>
    <property type="match status" value="1"/>
</dbReference>
<dbReference type="Pfam" id="PF01336">
    <property type="entry name" value="tRNA_anti-codon"/>
    <property type="match status" value="1"/>
</dbReference>
<dbReference type="PRINTS" id="PR01042">
    <property type="entry name" value="TRNASYNTHASP"/>
</dbReference>
<dbReference type="SUPFAM" id="SSF55681">
    <property type="entry name" value="Class II aaRS and biotin synthetases"/>
    <property type="match status" value="1"/>
</dbReference>
<dbReference type="SUPFAM" id="SSF50249">
    <property type="entry name" value="Nucleic acid-binding proteins"/>
    <property type="match status" value="1"/>
</dbReference>
<dbReference type="PROSITE" id="PS50862">
    <property type="entry name" value="AA_TRNA_LIGASE_II"/>
    <property type="match status" value="1"/>
</dbReference>
<feature type="chain" id="PRO_1000051432" description="Asparagine--tRNA ligase">
    <location>
        <begin position="1"/>
        <end position="466"/>
    </location>
</feature>